<proteinExistence type="evidence at transcript level"/>
<gene>
    <name type="primary">PDI</name>
</gene>
<name>PDI_WHEAT</name>
<reference key="1">
    <citation type="journal article" date="1995" name="Plant Physiol.">
        <title>Nucleotide sequence of a wheat cDNA encoding protein disulfide isomerase.</title>
        <authorList>
            <person name="Shimoni Y."/>
            <person name="Segal G."/>
            <person name="Zhu X.Z."/>
            <person name="Galili G."/>
        </authorList>
    </citation>
    <scope>NUCLEOTIDE SEQUENCE [MRNA]</scope>
    <source>
        <strain>cv. Chinese Spring</strain>
    </source>
</reference>
<protein>
    <recommendedName>
        <fullName>Protein disulfide-isomerase</fullName>
        <shortName>PDI</shortName>
        <ecNumber>5.3.4.1</ecNumber>
    </recommendedName>
</protein>
<comment type="function">
    <text evidence="1">Participates in the folding of proteins containing disulfide bonds, may be involved in glycosylation, prolyl hydroxylation and triglyceride transfer.</text>
</comment>
<comment type="catalytic activity">
    <reaction>
        <text>Catalyzes the rearrangement of -S-S- bonds in proteins.</text>
        <dbReference type="EC" id="5.3.4.1"/>
    </reaction>
</comment>
<comment type="subcellular location">
    <subcellularLocation>
        <location evidence="4">Endoplasmic reticulum lumen</location>
    </subcellularLocation>
</comment>
<comment type="similarity">
    <text evidence="6">Belongs to the protein disulfide isomerase family.</text>
</comment>
<evidence type="ECO:0000250" key="1"/>
<evidence type="ECO:0000255" key="2"/>
<evidence type="ECO:0000255" key="3">
    <source>
        <dbReference type="PROSITE-ProRule" id="PRU00691"/>
    </source>
</evidence>
<evidence type="ECO:0000255" key="4">
    <source>
        <dbReference type="PROSITE-ProRule" id="PRU10138"/>
    </source>
</evidence>
<evidence type="ECO:0000256" key="5">
    <source>
        <dbReference type="SAM" id="MobiDB-lite"/>
    </source>
</evidence>
<evidence type="ECO:0000305" key="6"/>
<sequence length="515" mass="56533">MAISKVWISLLLALAVVLSAPAARAEEAAAAEEAAAAPEAVLTLHADNFDDAIAKHPFILVEFYAPWCGHCKSLAPEYEKAAQLLSKHDPAIVLAKVDANDEKNKPLAGKYEVQGFPTLKIFRSGGKNIQEYKGPREAEGIVEYLKKQVGPASKEIKAPEDATYLEDGKIHIVGVFTEFSGTEFTNFLELAEKLRSDYDFGHTVHANHLPRGDAAVERPLVRLFKPFDELVVDSKDFDVSALEKFIDASSTPKVVTFDKNPDNHPYLLKYFQSNAPKAMLFLNFSTGPFESFKSAYYGAVEEFSGKDVKFLIGDIEASQGAFQYNGLKEDQAPLILIQDSDSKKFLKEQVEAGQIVAWLKDYFDGKLTPFRKSEPIPEANNEPVKVVVADNIHDVVFKSAKNVLIEFYAPWCGHCKKLAPILDEAAATLQSEEDVVIAKIDATANDVPGEFDVQGYPTLYFVTPSGKKVSYEGGRTADEIVDYIKKNKETAGQAAAAATEKAAEPAATEPLKDEL</sequence>
<feature type="signal peptide" evidence="1">
    <location>
        <begin position="1"/>
        <end position="25"/>
    </location>
</feature>
<feature type="chain" id="PRO_0000034212" description="Protein disulfide-isomerase">
    <location>
        <begin position="26"/>
        <end position="515"/>
    </location>
</feature>
<feature type="domain" description="Thioredoxin 1" evidence="3">
    <location>
        <begin position="26"/>
        <end position="150"/>
    </location>
</feature>
<feature type="domain" description="Thioredoxin 2" evidence="3">
    <location>
        <begin position="346"/>
        <end position="489"/>
    </location>
</feature>
<feature type="region of interest" description="Disordered" evidence="5">
    <location>
        <begin position="494"/>
        <end position="515"/>
    </location>
</feature>
<feature type="short sequence motif" description="Prevents secretion from ER" evidence="4">
    <location>
        <begin position="512"/>
        <end position="515"/>
    </location>
</feature>
<feature type="compositionally biased region" description="Low complexity" evidence="5">
    <location>
        <begin position="494"/>
        <end position="509"/>
    </location>
</feature>
<feature type="active site" description="Nucleophile" evidence="1">
    <location>
        <position position="68"/>
    </location>
</feature>
<feature type="active site" description="Nucleophile" evidence="1">
    <location>
        <position position="71"/>
    </location>
</feature>
<feature type="active site" description="Nucleophile" evidence="1">
    <location>
        <position position="412"/>
    </location>
</feature>
<feature type="active site" description="Nucleophile" evidence="1">
    <location>
        <position position="415"/>
    </location>
</feature>
<feature type="site" description="Contributes to redox potential value" evidence="1">
    <location>
        <position position="69"/>
    </location>
</feature>
<feature type="site" description="Contributes to redox potential value" evidence="1">
    <location>
        <position position="70"/>
    </location>
</feature>
<feature type="site" description="Lowers pKa of C-terminal Cys of first active site" evidence="1">
    <location>
        <position position="136"/>
    </location>
</feature>
<feature type="site" description="Contributes to redox potential value" evidence="1">
    <location>
        <position position="413"/>
    </location>
</feature>
<feature type="site" description="Contributes to redox potential value" evidence="1">
    <location>
        <position position="414"/>
    </location>
</feature>
<feature type="site" description="Lowers pKa of C-terminal Cys of second active site" evidence="1">
    <location>
        <position position="475"/>
    </location>
</feature>
<feature type="glycosylation site" description="N-linked (GlcNAc...) asparagine" evidence="2">
    <location>
        <position position="283"/>
    </location>
</feature>
<feature type="disulfide bond" description="Redox-active" evidence="3">
    <location>
        <begin position="68"/>
        <end position="71"/>
    </location>
</feature>
<feature type="disulfide bond" description="Redox-active" evidence="3">
    <location>
        <begin position="412"/>
        <end position="415"/>
    </location>
</feature>
<organism>
    <name type="scientific">Triticum aestivum</name>
    <name type="common">Wheat</name>
    <dbReference type="NCBI Taxonomy" id="4565"/>
    <lineage>
        <taxon>Eukaryota</taxon>
        <taxon>Viridiplantae</taxon>
        <taxon>Streptophyta</taxon>
        <taxon>Embryophyta</taxon>
        <taxon>Tracheophyta</taxon>
        <taxon>Spermatophyta</taxon>
        <taxon>Magnoliopsida</taxon>
        <taxon>Liliopsida</taxon>
        <taxon>Poales</taxon>
        <taxon>Poaceae</taxon>
        <taxon>BOP clade</taxon>
        <taxon>Pooideae</taxon>
        <taxon>Triticodae</taxon>
        <taxon>Triticeae</taxon>
        <taxon>Triticinae</taxon>
        <taxon>Triticum</taxon>
    </lineage>
</organism>
<dbReference type="EC" id="5.3.4.1"/>
<dbReference type="EMBL" id="U11496">
    <property type="protein sequence ID" value="AAA19660.1"/>
    <property type="molecule type" value="mRNA"/>
</dbReference>
<dbReference type="PIR" id="T06262">
    <property type="entry name" value="T06262"/>
</dbReference>
<dbReference type="SMR" id="P52589"/>
<dbReference type="STRING" id="4565.P52589"/>
<dbReference type="GlyCosmos" id="P52589">
    <property type="glycosylation" value="1 site, No reported glycans"/>
</dbReference>
<dbReference type="PaxDb" id="4565-Traes_4DS_26272902A.1"/>
<dbReference type="eggNOG" id="KOG0190">
    <property type="taxonomic scope" value="Eukaryota"/>
</dbReference>
<dbReference type="Proteomes" id="UP000019116">
    <property type="component" value="Unplaced"/>
</dbReference>
<dbReference type="ExpressionAtlas" id="P52589">
    <property type="expression patterns" value="baseline and differential"/>
</dbReference>
<dbReference type="GO" id="GO:0005783">
    <property type="term" value="C:endoplasmic reticulum"/>
    <property type="evidence" value="ECO:0000318"/>
    <property type="project" value="GO_Central"/>
</dbReference>
<dbReference type="GO" id="GO:0005788">
    <property type="term" value="C:endoplasmic reticulum lumen"/>
    <property type="evidence" value="ECO:0007669"/>
    <property type="project" value="UniProtKB-SubCell"/>
</dbReference>
<dbReference type="GO" id="GO:0003756">
    <property type="term" value="F:protein disulfide isomerase activity"/>
    <property type="evidence" value="ECO:0000318"/>
    <property type="project" value="GO_Central"/>
</dbReference>
<dbReference type="GO" id="GO:0006457">
    <property type="term" value="P:protein folding"/>
    <property type="evidence" value="ECO:0000318"/>
    <property type="project" value="GO_Central"/>
</dbReference>
<dbReference type="GO" id="GO:0034976">
    <property type="term" value="P:response to endoplasmic reticulum stress"/>
    <property type="evidence" value="ECO:0000318"/>
    <property type="project" value="GO_Central"/>
</dbReference>
<dbReference type="CDD" id="cd02961">
    <property type="entry name" value="PDI_a_family"/>
    <property type="match status" value="1"/>
</dbReference>
<dbReference type="CDD" id="cd02995">
    <property type="entry name" value="PDI_a_PDI_a'_C"/>
    <property type="match status" value="1"/>
</dbReference>
<dbReference type="CDD" id="cd02982">
    <property type="entry name" value="PDI_b'_family"/>
    <property type="match status" value="1"/>
</dbReference>
<dbReference type="CDD" id="cd02981">
    <property type="entry name" value="PDI_b_family"/>
    <property type="match status" value="1"/>
</dbReference>
<dbReference type="FunFam" id="3.40.30.10:FF:000143">
    <property type="entry name" value="Protein disulfide-isomerase"/>
    <property type="match status" value="1"/>
</dbReference>
<dbReference type="FunFam" id="3.40.30.10:FF:000150">
    <property type="entry name" value="Protein disulfide-isomerase"/>
    <property type="match status" value="1"/>
</dbReference>
<dbReference type="FunFam" id="3.40.30.10:FF:000152">
    <property type="entry name" value="Protein disulfide-isomerase"/>
    <property type="match status" value="1"/>
</dbReference>
<dbReference type="FunFam" id="3.40.30.10:FF:000184">
    <property type="entry name" value="Protein disulfide-isomerase"/>
    <property type="match status" value="1"/>
</dbReference>
<dbReference type="Gene3D" id="3.40.30.10">
    <property type="entry name" value="Glutaredoxin"/>
    <property type="match status" value="4"/>
</dbReference>
<dbReference type="InterPro" id="IPR005788">
    <property type="entry name" value="PDI_thioredoxin-like_dom"/>
</dbReference>
<dbReference type="InterPro" id="IPR005792">
    <property type="entry name" value="Prot_disulphide_isomerase"/>
</dbReference>
<dbReference type="InterPro" id="IPR036249">
    <property type="entry name" value="Thioredoxin-like_sf"/>
</dbReference>
<dbReference type="InterPro" id="IPR017937">
    <property type="entry name" value="Thioredoxin_CS"/>
</dbReference>
<dbReference type="InterPro" id="IPR013766">
    <property type="entry name" value="Thioredoxin_domain"/>
</dbReference>
<dbReference type="NCBIfam" id="TIGR01130">
    <property type="entry name" value="ER_PDI_fam"/>
    <property type="match status" value="1"/>
</dbReference>
<dbReference type="NCBIfam" id="TIGR01126">
    <property type="entry name" value="pdi_dom"/>
    <property type="match status" value="2"/>
</dbReference>
<dbReference type="PANTHER" id="PTHR18929">
    <property type="entry name" value="PROTEIN DISULFIDE ISOMERASE"/>
    <property type="match status" value="1"/>
</dbReference>
<dbReference type="PANTHER" id="PTHR18929:SF132">
    <property type="entry name" value="PROTEIN DISULFIDE-ISOMERASE A3"/>
    <property type="match status" value="1"/>
</dbReference>
<dbReference type="Pfam" id="PF00085">
    <property type="entry name" value="Thioredoxin"/>
    <property type="match status" value="2"/>
</dbReference>
<dbReference type="Pfam" id="PF13848">
    <property type="entry name" value="Thioredoxin_6"/>
    <property type="match status" value="1"/>
</dbReference>
<dbReference type="PRINTS" id="PR00421">
    <property type="entry name" value="THIOREDOXIN"/>
</dbReference>
<dbReference type="SUPFAM" id="SSF52833">
    <property type="entry name" value="Thioredoxin-like"/>
    <property type="match status" value="4"/>
</dbReference>
<dbReference type="PROSITE" id="PS00014">
    <property type="entry name" value="ER_TARGET"/>
    <property type="match status" value="1"/>
</dbReference>
<dbReference type="PROSITE" id="PS00194">
    <property type="entry name" value="THIOREDOXIN_1"/>
    <property type="match status" value="2"/>
</dbReference>
<dbReference type="PROSITE" id="PS51352">
    <property type="entry name" value="THIOREDOXIN_2"/>
    <property type="match status" value="2"/>
</dbReference>
<accession>P52589</accession>
<keyword id="KW-1015">Disulfide bond</keyword>
<keyword id="KW-0256">Endoplasmic reticulum</keyword>
<keyword id="KW-0325">Glycoprotein</keyword>
<keyword id="KW-0413">Isomerase</keyword>
<keyword id="KW-0676">Redox-active center</keyword>
<keyword id="KW-1185">Reference proteome</keyword>
<keyword id="KW-0677">Repeat</keyword>
<keyword id="KW-0732">Signal</keyword>